<proteinExistence type="inferred from homology"/>
<sequence length="226" mass="25006">MKFKAIVIDIDGTITCENRELHLGAVKKIRILKVPVVLATGNILCYARTASKLIGLDGAVIAENGGAVTVRYDLNGTFEESLEECEKAFSFLSEYFKLTKLDPFYRKTEIALRRDFNLEKARTLLETQPFDVEMVDTKYAVHIKSTRINKGSGLRKLAEIMGLEAEDFVAIGDSENDIEMFEAAGFGIAVANGDERIKEAANYVTEASYGDGAVEAIEFLESNGWI</sequence>
<protein>
    <recommendedName>
        <fullName evidence="1">Phosphoglycolate phosphatase</fullName>
        <shortName evidence="1">PGP</shortName>
        <shortName evidence="1">PGPase</shortName>
        <ecNumber evidence="1">3.1.3.18</ecNumber>
    </recommendedName>
</protein>
<name>PGP_METAC</name>
<dbReference type="EC" id="3.1.3.18" evidence="1"/>
<dbReference type="EMBL" id="AE010299">
    <property type="protein sequence ID" value="AAM06906.1"/>
    <property type="molecule type" value="Genomic_DNA"/>
</dbReference>
<dbReference type="RefSeq" id="WP_011023459.1">
    <property type="nucleotide sequence ID" value="NC_003552.1"/>
</dbReference>
<dbReference type="SMR" id="Q8TK72"/>
<dbReference type="STRING" id="188937.MA_3544"/>
<dbReference type="EnsemblBacteria" id="AAM06906">
    <property type="protein sequence ID" value="AAM06906"/>
    <property type="gene ID" value="MA_3544"/>
</dbReference>
<dbReference type="GeneID" id="1475437"/>
<dbReference type="KEGG" id="mac:MA_3544"/>
<dbReference type="HOGENOM" id="CLU_044146_2_0_2"/>
<dbReference type="InParanoid" id="Q8TK72"/>
<dbReference type="OrthoDB" id="120822at2157"/>
<dbReference type="PhylomeDB" id="Q8TK72"/>
<dbReference type="Proteomes" id="UP000002487">
    <property type="component" value="Chromosome"/>
</dbReference>
<dbReference type="GO" id="GO:0005829">
    <property type="term" value="C:cytosol"/>
    <property type="evidence" value="ECO:0000318"/>
    <property type="project" value="GO_Central"/>
</dbReference>
<dbReference type="GO" id="GO:0000287">
    <property type="term" value="F:magnesium ion binding"/>
    <property type="evidence" value="ECO:0000318"/>
    <property type="project" value="GO_Central"/>
</dbReference>
<dbReference type="GO" id="GO:0016791">
    <property type="term" value="F:phosphatase activity"/>
    <property type="evidence" value="ECO:0000318"/>
    <property type="project" value="GO_Central"/>
</dbReference>
<dbReference type="GO" id="GO:0008967">
    <property type="term" value="F:phosphoglycolate phosphatase activity"/>
    <property type="evidence" value="ECO:0007669"/>
    <property type="project" value="UniProtKB-UniRule"/>
</dbReference>
<dbReference type="CDD" id="cd07514">
    <property type="entry name" value="HAD_Pase"/>
    <property type="match status" value="1"/>
</dbReference>
<dbReference type="Gene3D" id="3.90.1070.10">
    <property type="match status" value="1"/>
</dbReference>
<dbReference type="Gene3D" id="3.40.50.1000">
    <property type="entry name" value="HAD superfamily/HAD-like"/>
    <property type="match status" value="1"/>
</dbReference>
<dbReference type="HAMAP" id="MF_01419">
    <property type="entry name" value="GPH_hydrolase_arch"/>
    <property type="match status" value="1"/>
</dbReference>
<dbReference type="InterPro" id="IPR036412">
    <property type="entry name" value="HAD-like_sf"/>
</dbReference>
<dbReference type="InterPro" id="IPR006379">
    <property type="entry name" value="HAD-SF_hydro_IIB"/>
</dbReference>
<dbReference type="InterPro" id="IPR023214">
    <property type="entry name" value="HAD_sf"/>
</dbReference>
<dbReference type="InterPro" id="IPR006382">
    <property type="entry name" value="PGPase"/>
</dbReference>
<dbReference type="NCBIfam" id="TIGR01484">
    <property type="entry name" value="HAD-SF-IIB"/>
    <property type="match status" value="1"/>
</dbReference>
<dbReference type="NCBIfam" id="TIGR01487">
    <property type="entry name" value="Pglycolate_arch"/>
    <property type="match status" value="1"/>
</dbReference>
<dbReference type="NCBIfam" id="NF002245">
    <property type="entry name" value="PRK01158.1"/>
    <property type="match status" value="1"/>
</dbReference>
<dbReference type="NCBIfam" id="TIGR01482">
    <property type="entry name" value="SPP-subfamily"/>
    <property type="match status" value="1"/>
</dbReference>
<dbReference type="PANTHER" id="PTHR10000:SF8">
    <property type="entry name" value="HAD SUPERFAMILY HYDROLASE-LIKE, TYPE 3"/>
    <property type="match status" value="1"/>
</dbReference>
<dbReference type="PANTHER" id="PTHR10000">
    <property type="entry name" value="PHOSPHOSERINE PHOSPHATASE"/>
    <property type="match status" value="1"/>
</dbReference>
<dbReference type="Pfam" id="PF08282">
    <property type="entry name" value="Hydrolase_3"/>
    <property type="match status" value="2"/>
</dbReference>
<dbReference type="SFLD" id="SFLDG01144">
    <property type="entry name" value="C2.B.4:_PGP_Like"/>
    <property type="match status" value="1"/>
</dbReference>
<dbReference type="SFLD" id="SFLDF00446">
    <property type="entry name" value="phosphoglycolate_phosphatase_3"/>
    <property type="match status" value="1"/>
</dbReference>
<dbReference type="SUPFAM" id="SSF56784">
    <property type="entry name" value="HAD-like"/>
    <property type="match status" value="1"/>
</dbReference>
<accession>Q8TK72</accession>
<comment type="function">
    <text evidence="1">Catalyzes the dephosphorylation of 2-phosphoglycolate.</text>
</comment>
<comment type="catalytic activity">
    <reaction evidence="1">
        <text>2-phosphoglycolate + H2O = glycolate + phosphate</text>
        <dbReference type="Rhea" id="RHEA:14369"/>
        <dbReference type="ChEBI" id="CHEBI:15377"/>
        <dbReference type="ChEBI" id="CHEBI:29805"/>
        <dbReference type="ChEBI" id="CHEBI:43474"/>
        <dbReference type="ChEBI" id="CHEBI:58033"/>
        <dbReference type="EC" id="3.1.3.18"/>
    </reaction>
</comment>
<comment type="cofactor">
    <cofactor evidence="1">
        <name>Mg(2+)</name>
        <dbReference type="ChEBI" id="CHEBI:18420"/>
    </cofactor>
</comment>
<comment type="similarity">
    <text evidence="1">Belongs to the archaeal SPP-like hydrolase family.</text>
</comment>
<evidence type="ECO:0000255" key="1">
    <source>
        <dbReference type="HAMAP-Rule" id="MF_01419"/>
    </source>
</evidence>
<feature type="chain" id="PRO_0000146717" description="Phosphoglycolate phosphatase">
    <location>
        <begin position="1"/>
        <end position="226"/>
    </location>
</feature>
<feature type="active site" description="Nucleophile" evidence="1">
    <location>
        <position position="9"/>
    </location>
</feature>
<feature type="binding site" evidence="1">
    <location>
        <position position="9"/>
    </location>
    <ligand>
        <name>Mg(2+)</name>
        <dbReference type="ChEBI" id="CHEBI:18420"/>
    </ligand>
</feature>
<feature type="binding site" evidence="1">
    <location>
        <position position="11"/>
    </location>
    <ligand>
        <name>Mg(2+)</name>
        <dbReference type="ChEBI" id="CHEBI:18420"/>
    </ligand>
</feature>
<feature type="binding site" evidence="1">
    <location>
        <position position="150"/>
    </location>
    <ligand>
        <name>substrate</name>
    </ligand>
</feature>
<feature type="binding site" evidence="1">
    <location>
        <position position="173"/>
    </location>
    <ligand>
        <name>Mg(2+)</name>
        <dbReference type="ChEBI" id="CHEBI:18420"/>
    </ligand>
</feature>
<feature type="binding site" evidence="1">
    <location>
        <position position="177"/>
    </location>
    <ligand>
        <name>Mg(2+)</name>
        <dbReference type="ChEBI" id="CHEBI:18420"/>
    </ligand>
</feature>
<keyword id="KW-0119">Carbohydrate metabolism</keyword>
<keyword id="KW-0378">Hydrolase</keyword>
<keyword id="KW-0460">Magnesium</keyword>
<keyword id="KW-0479">Metal-binding</keyword>
<keyword id="KW-1185">Reference proteome</keyword>
<reference key="1">
    <citation type="journal article" date="2002" name="Genome Res.">
        <title>The genome of Methanosarcina acetivorans reveals extensive metabolic and physiological diversity.</title>
        <authorList>
            <person name="Galagan J.E."/>
            <person name="Nusbaum C."/>
            <person name="Roy A."/>
            <person name="Endrizzi M.G."/>
            <person name="Macdonald P."/>
            <person name="FitzHugh W."/>
            <person name="Calvo S."/>
            <person name="Engels R."/>
            <person name="Smirnov S."/>
            <person name="Atnoor D."/>
            <person name="Brown A."/>
            <person name="Allen N."/>
            <person name="Naylor J."/>
            <person name="Stange-Thomann N."/>
            <person name="DeArellano K."/>
            <person name="Johnson R."/>
            <person name="Linton L."/>
            <person name="McEwan P."/>
            <person name="McKernan K."/>
            <person name="Talamas J."/>
            <person name="Tirrell A."/>
            <person name="Ye W."/>
            <person name="Zimmer A."/>
            <person name="Barber R.D."/>
            <person name="Cann I."/>
            <person name="Graham D.E."/>
            <person name="Grahame D.A."/>
            <person name="Guss A.M."/>
            <person name="Hedderich R."/>
            <person name="Ingram-Smith C."/>
            <person name="Kuettner H.C."/>
            <person name="Krzycki J.A."/>
            <person name="Leigh J.A."/>
            <person name="Li W."/>
            <person name="Liu J."/>
            <person name="Mukhopadhyay B."/>
            <person name="Reeve J.N."/>
            <person name="Smith K."/>
            <person name="Springer T.A."/>
            <person name="Umayam L.A."/>
            <person name="White O."/>
            <person name="White R.H."/>
            <person name="de Macario E.C."/>
            <person name="Ferry J.G."/>
            <person name="Jarrell K.F."/>
            <person name="Jing H."/>
            <person name="Macario A.J.L."/>
            <person name="Paulsen I.T."/>
            <person name="Pritchett M."/>
            <person name="Sowers K.R."/>
            <person name="Swanson R.V."/>
            <person name="Zinder S.H."/>
            <person name="Lander E."/>
            <person name="Metcalf W.W."/>
            <person name="Birren B."/>
        </authorList>
    </citation>
    <scope>NUCLEOTIDE SEQUENCE [LARGE SCALE GENOMIC DNA]</scope>
    <source>
        <strain>ATCC 35395 / DSM 2834 / JCM 12185 / C2A</strain>
    </source>
</reference>
<organism>
    <name type="scientific">Methanosarcina acetivorans (strain ATCC 35395 / DSM 2834 / JCM 12185 / C2A)</name>
    <dbReference type="NCBI Taxonomy" id="188937"/>
    <lineage>
        <taxon>Archaea</taxon>
        <taxon>Methanobacteriati</taxon>
        <taxon>Methanobacteriota</taxon>
        <taxon>Stenosarchaea group</taxon>
        <taxon>Methanomicrobia</taxon>
        <taxon>Methanosarcinales</taxon>
        <taxon>Methanosarcinaceae</taxon>
        <taxon>Methanosarcina</taxon>
    </lineage>
</organism>
<gene>
    <name type="ordered locus">MA_3544</name>
</gene>